<sequence length="499" mass="56206">MTIHIKNNVNWVGQRDWEVSDFHGTEFKMTKGTSYNSYLIQEEKTILIDTVDHRFSHQFIQNLEMEIDLTSIDYIVINHAEEDHAGALAALMEKIPGTPIYCTENAIDSIVGHHHHPEWNFKPIKTGDALDIGNGKQLVFVEAPMLHWPDSMMTYLTGDAILFSNDAFGQHYCDERLFNDEVDQTELMDQCLRYYANILTPFSALVTAKIKEVLSFNLPVDMIATSHGCVWRDNPTQIIHQYLEWADNYQEDRITLFYDSMSNNTRMMADAIAQGIHDVDPGVAVKVFNVSRQDKNDILTSVFRSKGILVGSSTMNNVMMPKIAGMLEEITGLRFRAKKAGAFGSYGWNGGAVDRIHSRLTDAGFETAVGLKAKWRPDGKAMQLCREHGQFIAKQWALKPVTTTFQTINVEKKTIPASIAEPVIMVDPSVSSTVESEISVIASNDDKQCMLCTVCNWVYDPEIGEPNQGVEPNTAWIDVPDYFLCPECNLGKDVFVEVK</sequence>
<proteinExistence type="inferred from homology"/>
<accession>B6EIL4</accession>
<evidence type="ECO:0000255" key="1">
    <source>
        <dbReference type="HAMAP-Rule" id="MF_01312"/>
    </source>
</evidence>
<dbReference type="EMBL" id="FM178379">
    <property type="protein sequence ID" value="CAQ79884.1"/>
    <property type="molecule type" value="Genomic_DNA"/>
</dbReference>
<dbReference type="RefSeq" id="WP_012550715.1">
    <property type="nucleotide sequence ID" value="NC_011312.1"/>
</dbReference>
<dbReference type="SMR" id="B6EIL4"/>
<dbReference type="KEGG" id="vsa:VSAL_I2199"/>
<dbReference type="eggNOG" id="COG0426">
    <property type="taxonomic scope" value="Bacteria"/>
</dbReference>
<dbReference type="eggNOG" id="COG1773">
    <property type="taxonomic scope" value="Bacteria"/>
</dbReference>
<dbReference type="HOGENOM" id="CLU_017490_0_1_6"/>
<dbReference type="UniPathway" id="UPA00638"/>
<dbReference type="Proteomes" id="UP000001730">
    <property type="component" value="Chromosome 1"/>
</dbReference>
<dbReference type="GO" id="GO:0005737">
    <property type="term" value="C:cytoplasm"/>
    <property type="evidence" value="ECO:0007669"/>
    <property type="project" value="UniProtKB-SubCell"/>
</dbReference>
<dbReference type="GO" id="GO:0009055">
    <property type="term" value="F:electron transfer activity"/>
    <property type="evidence" value="ECO:0007669"/>
    <property type="project" value="UniProtKB-UniRule"/>
</dbReference>
<dbReference type="GO" id="GO:0010181">
    <property type="term" value="F:FMN binding"/>
    <property type="evidence" value="ECO:0007669"/>
    <property type="project" value="InterPro"/>
</dbReference>
<dbReference type="GO" id="GO:0005506">
    <property type="term" value="F:iron ion binding"/>
    <property type="evidence" value="ECO:0007669"/>
    <property type="project" value="InterPro"/>
</dbReference>
<dbReference type="GO" id="GO:0016966">
    <property type="term" value="F:nitric oxide reductase activity"/>
    <property type="evidence" value="ECO:0007669"/>
    <property type="project" value="InterPro"/>
</dbReference>
<dbReference type="CDD" id="cd07709">
    <property type="entry name" value="flavodiiron_proteins_MBL-fold"/>
    <property type="match status" value="1"/>
</dbReference>
<dbReference type="CDD" id="cd00730">
    <property type="entry name" value="rubredoxin"/>
    <property type="match status" value="1"/>
</dbReference>
<dbReference type="Gene3D" id="2.20.28.10">
    <property type="match status" value="1"/>
</dbReference>
<dbReference type="Gene3D" id="3.40.50.360">
    <property type="match status" value="1"/>
</dbReference>
<dbReference type="Gene3D" id="3.60.15.10">
    <property type="entry name" value="Ribonuclease Z/Hydroxyacylglutathione hydrolase-like"/>
    <property type="match status" value="1"/>
</dbReference>
<dbReference type="HAMAP" id="MF_01312">
    <property type="entry name" value="NorV"/>
    <property type="match status" value="1"/>
</dbReference>
<dbReference type="InterPro" id="IPR023957">
    <property type="entry name" value="Anaer_NO_rdtase_flvorubredoxin"/>
</dbReference>
<dbReference type="InterPro" id="IPR008254">
    <property type="entry name" value="Flavodoxin/NO_synth"/>
</dbReference>
<dbReference type="InterPro" id="IPR029039">
    <property type="entry name" value="Flavoprotein-like_sf"/>
</dbReference>
<dbReference type="InterPro" id="IPR001279">
    <property type="entry name" value="Metallo-B-lactamas"/>
</dbReference>
<dbReference type="InterPro" id="IPR045761">
    <property type="entry name" value="ODP_dom"/>
</dbReference>
<dbReference type="InterPro" id="IPR036866">
    <property type="entry name" value="RibonucZ/Hydroxyglut_hydro"/>
</dbReference>
<dbReference type="InterPro" id="IPR024934">
    <property type="entry name" value="Rubredoxin-like_dom"/>
</dbReference>
<dbReference type="InterPro" id="IPR024935">
    <property type="entry name" value="Rubredoxin_dom"/>
</dbReference>
<dbReference type="NCBIfam" id="NF003954">
    <property type="entry name" value="PRK05452.1"/>
    <property type="match status" value="1"/>
</dbReference>
<dbReference type="PANTHER" id="PTHR43717">
    <property type="entry name" value="ANAEROBIC NITRIC OXIDE REDUCTASE FLAVORUBREDOXIN"/>
    <property type="match status" value="1"/>
</dbReference>
<dbReference type="PANTHER" id="PTHR43717:SF1">
    <property type="entry name" value="ANAEROBIC NITRIC OXIDE REDUCTASE FLAVORUBREDOXIN"/>
    <property type="match status" value="1"/>
</dbReference>
<dbReference type="Pfam" id="PF00258">
    <property type="entry name" value="Flavodoxin_1"/>
    <property type="match status" value="1"/>
</dbReference>
<dbReference type="Pfam" id="PF19583">
    <property type="entry name" value="ODP"/>
    <property type="match status" value="1"/>
</dbReference>
<dbReference type="Pfam" id="PF00301">
    <property type="entry name" value="Rubredoxin"/>
    <property type="match status" value="1"/>
</dbReference>
<dbReference type="PRINTS" id="PR00163">
    <property type="entry name" value="RUBREDOXIN"/>
</dbReference>
<dbReference type="SMART" id="SM00849">
    <property type="entry name" value="Lactamase_B"/>
    <property type="match status" value="1"/>
</dbReference>
<dbReference type="SUPFAM" id="SSF52218">
    <property type="entry name" value="Flavoproteins"/>
    <property type="match status" value="1"/>
</dbReference>
<dbReference type="SUPFAM" id="SSF56281">
    <property type="entry name" value="Metallo-hydrolase/oxidoreductase"/>
    <property type="match status" value="1"/>
</dbReference>
<dbReference type="SUPFAM" id="SSF57802">
    <property type="entry name" value="Rubredoxin-like"/>
    <property type="match status" value="1"/>
</dbReference>
<dbReference type="PROSITE" id="PS50902">
    <property type="entry name" value="FLAVODOXIN_LIKE"/>
    <property type="match status" value="1"/>
</dbReference>
<dbReference type="PROSITE" id="PS50903">
    <property type="entry name" value="RUBREDOXIN_LIKE"/>
    <property type="match status" value="1"/>
</dbReference>
<gene>
    <name evidence="1" type="primary">norV</name>
    <name evidence="1" type="synonym">flrD</name>
    <name type="ordered locus">VSAL_I2199</name>
</gene>
<feature type="chain" id="PRO_1000141166" description="Anaerobic nitric oxide reductase flavorubredoxin">
    <location>
        <begin position="1"/>
        <end position="499"/>
    </location>
</feature>
<feature type="domain" description="Flavodoxin-like" evidence="1">
    <location>
        <begin position="254"/>
        <end position="393"/>
    </location>
</feature>
<feature type="domain" description="Rubredoxin-like" evidence="1">
    <location>
        <begin position="447"/>
        <end position="498"/>
    </location>
</feature>
<feature type="region of interest" description="Zinc metallo-hydrolase">
    <location>
        <begin position="30"/>
        <end position="210"/>
    </location>
</feature>
<feature type="binding site" evidence="1">
    <location>
        <position position="79"/>
    </location>
    <ligand>
        <name>Fe cation</name>
        <dbReference type="ChEBI" id="CHEBI:24875"/>
        <label>1</label>
    </ligand>
</feature>
<feature type="binding site" evidence="1">
    <location>
        <position position="81"/>
    </location>
    <ligand>
        <name>Fe cation</name>
        <dbReference type="ChEBI" id="CHEBI:24875"/>
        <label>1</label>
    </ligand>
</feature>
<feature type="binding site" evidence="1">
    <location>
        <position position="83"/>
    </location>
    <ligand>
        <name>Fe cation</name>
        <dbReference type="ChEBI" id="CHEBI:24875"/>
        <label>2</label>
    </ligand>
</feature>
<feature type="binding site" evidence="1">
    <location>
        <position position="147"/>
    </location>
    <ligand>
        <name>Fe cation</name>
        <dbReference type="ChEBI" id="CHEBI:24875"/>
        <label>1</label>
    </ligand>
</feature>
<feature type="binding site" evidence="1">
    <location>
        <position position="166"/>
    </location>
    <ligand>
        <name>Fe cation</name>
        <dbReference type="ChEBI" id="CHEBI:24875"/>
        <label>1</label>
    </ligand>
</feature>
<feature type="binding site" evidence="1">
    <location>
        <position position="166"/>
    </location>
    <ligand>
        <name>Fe cation</name>
        <dbReference type="ChEBI" id="CHEBI:24875"/>
        <label>2</label>
    </ligand>
</feature>
<feature type="binding site" evidence="1">
    <location>
        <position position="227"/>
    </location>
    <ligand>
        <name>Fe cation</name>
        <dbReference type="ChEBI" id="CHEBI:24875"/>
        <label>2</label>
    </ligand>
</feature>
<feature type="binding site" evidence="1">
    <location>
        <begin position="260"/>
        <end position="264"/>
    </location>
    <ligand>
        <name>FMN</name>
        <dbReference type="ChEBI" id="CHEBI:58210"/>
    </ligand>
</feature>
<feature type="binding site" evidence="1">
    <location>
        <begin position="342"/>
        <end position="369"/>
    </location>
    <ligand>
        <name>FMN</name>
        <dbReference type="ChEBI" id="CHEBI:58210"/>
    </ligand>
</feature>
<feature type="binding site" evidence="1">
    <location>
        <position position="452"/>
    </location>
    <ligand>
        <name>Fe cation</name>
        <dbReference type="ChEBI" id="CHEBI:24875"/>
        <label>3</label>
    </ligand>
</feature>
<feature type="binding site" evidence="1">
    <location>
        <position position="455"/>
    </location>
    <ligand>
        <name>Fe cation</name>
        <dbReference type="ChEBI" id="CHEBI:24875"/>
        <label>3</label>
    </ligand>
</feature>
<feature type="binding site" evidence="1">
    <location>
        <position position="485"/>
    </location>
    <ligand>
        <name>Fe cation</name>
        <dbReference type="ChEBI" id="CHEBI:24875"/>
        <label>3</label>
    </ligand>
</feature>
<feature type="binding site" evidence="1">
    <location>
        <position position="488"/>
    </location>
    <ligand>
        <name>Fe cation</name>
        <dbReference type="ChEBI" id="CHEBI:24875"/>
        <label>3</label>
    </ligand>
</feature>
<organism>
    <name type="scientific">Aliivibrio salmonicida (strain LFI1238)</name>
    <name type="common">Vibrio salmonicida (strain LFI1238)</name>
    <dbReference type="NCBI Taxonomy" id="316275"/>
    <lineage>
        <taxon>Bacteria</taxon>
        <taxon>Pseudomonadati</taxon>
        <taxon>Pseudomonadota</taxon>
        <taxon>Gammaproteobacteria</taxon>
        <taxon>Vibrionales</taxon>
        <taxon>Vibrionaceae</taxon>
        <taxon>Aliivibrio</taxon>
    </lineage>
</organism>
<comment type="function">
    <text evidence="1">Anaerobic nitric oxide reductase; uses NADH to detoxify nitric oxide (NO), protecting several 4Fe-4S NO-sensitive enzymes. Has at least 2 reductase partners, only one of which (NorW, flavorubredoxin reductase) has been identified. NO probably binds to the di-iron center; electrons enter from the NorW at rubredoxin and are transferred sequentially to the FMN center and the di-iron center. Also able to function as an aerobic oxygen reductase.</text>
</comment>
<comment type="cofactor">
    <cofactor evidence="1">
        <name>Fe cation</name>
        <dbReference type="ChEBI" id="CHEBI:24875"/>
    </cofactor>
    <text evidence="1">Binds 3 Fe cations per monomer.</text>
</comment>
<comment type="cofactor">
    <cofactor evidence="1">
        <name>FMN</name>
        <dbReference type="ChEBI" id="CHEBI:58210"/>
    </cofactor>
    <text evidence="1">Binds 1 FMN per monomer.</text>
</comment>
<comment type="pathway">
    <text evidence="1">Nitrogen metabolism; nitric oxide reduction.</text>
</comment>
<comment type="subunit">
    <text evidence="1">Homotetramer.</text>
</comment>
<comment type="subcellular location">
    <subcellularLocation>
        <location evidence="1">Cytoplasm</location>
    </subcellularLocation>
</comment>
<comment type="similarity">
    <text evidence="1">In the N-terminal section; belongs to the zinc metallo-hydrolase group 3 family.</text>
</comment>
<keyword id="KW-0963">Cytoplasm</keyword>
<keyword id="KW-0249">Electron transport</keyword>
<keyword id="KW-0285">Flavoprotein</keyword>
<keyword id="KW-0288">FMN</keyword>
<keyword id="KW-0408">Iron</keyword>
<keyword id="KW-0479">Metal-binding</keyword>
<keyword id="KW-0560">Oxidoreductase</keyword>
<keyword id="KW-0813">Transport</keyword>
<name>NORV_ALISL</name>
<protein>
    <recommendedName>
        <fullName evidence="1">Anaerobic nitric oxide reductase flavorubredoxin</fullName>
        <shortName evidence="1">FlRd</shortName>
        <shortName evidence="1">FlavoRb</shortName>
    </recommendedName>
</protein>
<reference key="1">
    <citation type="journal article" date="2008" name="BMC Genomics">
        <title>The genome sequence of the fish pathogen Aliivibrio salmonicida strain LFI1238 shows extensive evidence of gene decay.</title>
        <authorList>
            <person name="Hjerde E."/>
            <person name="Lorentzen M.S."/>
            <person name="Holden M.T."/>
            <person name="Seeger K."/>
            <person name="Paulsen S."/>
            <person name="Bason N."/>
            <person name="Churcher C."/>
            <person name="Harris D."/>
            <person name="Norbertczak H."/>
            <person name="Quail M.A."/>
            <person name="Sanders S."/>
            <person name="Thurston S."/>
            <person name="Parkhill J."/>
            <person name="Willassen N.P."/>
            <person name="Thomson N.R."/>
        </authorList>
    </citation>
    <scope>NUCLEOTIDE SEQUENCE [LARGE SCALE GENOMIC DNA]</scope>
    <source>
        <strain>LFI1238</strain>
    </source>
</reference>